<reference key="1">
    <citation type="journal article" date="2007" name="Proc. Natl. Acad. Sci. U.S.A.">
        <title>Deep-sea vent epsilon-proteobacterial genomes provide insights into emergence of pathogens.</title>
        <authorList>
            <person name="Nakagawa S."/>
            <person name="Takaki Y."/>
            <person name="Shimamura S."/>
            <person name="Reysenbach A.-L."/>
            <person name="Takai K."/>
            <person name="Horikoshi K."/>
        </authorList>
    </citation>
    <scope>NUCLEOTIDE SEQUENCE [LARGE SCALE GENOMIC DNA]</scope>
    <source>
        <strain>NBC37-1</strain>
    </source>
</reference>
<evidence type="ECO:0000255" key="1">
    <source>
        <dbReference type="HAMAP-Rule" id="MF_01331"/>
    </source>
</evidence>
<evidence type="ECO:0000305" key="2"/>
<protein>
    <recommendedName>
        <fullName evidence="1">Large ribosomal subunit protein uL22</fullName>
    </recommendedName>
    <alternativeName>
        <fullName evidence="2">50S ribosomal protein L22</fullName>
    </alternativeName>
</protein>
<keyword id="KW-0687">Ribonucleoprotein</keyword>
<keyword id="KW-0689">Ribosomal protein</keyword>
<keyword id="KW-0694">RNA-binding</keyword>
<keyword id="KW-0699">rRNA-binding</keyword>
<comment type="function">
    <text evidence="1">This protein binds specifically to 23S rRNA; its binding is stimulated by other ribosomal proteins, e.g. L4, L17, and L20. It is important during the early stages of 50S assembly. It makes multiple contacts with different domains of the 23S rRNA in the assembled 50S subunit and ribosome (By similarity).</text>
</comment>
<comment type="function">
    <text evidence="1">The globular domain of the protein is located near the polypeptide exit tunnel on the outside of the subunit, while an extended beta-hairpin is found that lines the wall of the exit tunnel in the center of the 70S ribosome.</text>
</comment>
<comment type="subunit">
    <text evidence="1">Part of the 50S ribosomal subunit.</text>
</comment>
<comment type="similarity">
    <text evidence="1">Belongs to the universal ribosomal protein uL22 family.</text>
</comment>
<sequence>MSRALLKFVRVSPTKARLIAREVQGMNAELALASLEFMPNKAAGIISKVIASAVANGDFEPEEVEITSCRVDKAAVMKRWRPRARGTASRIIKPTAHILVEVGPAKKDGEDA</sequence>
<feature type="chain" id="PRO_1000052670" description="Large ribosomal subunit protein uL22">
    <location>
        <begin position="1"/>
        <end position="112"/>
    </location>
</feature>
<accession>A6QCQ3</accession>
<gene>
    <name evidence="1" type="primary">rplV</name>
    <name type="ordered locus">SUN_2326</name>
</gene>
<name>RL22_SULNB</name>
<organism>
    <name type="scientific">Sulfurovum sp. (strain NBC37-1)</name>
    <dbReference type="NCBI Taxonomy" id="387093"/>
    <lineage>
        <taxon>Bacteria</taxon>
        <taxon>Pseudomonadati</taxon>
        <taxon>Campylobacterota</taxon>
        <taxon>Epsilonproteobacteria</taxon>
        <taxon>Campylobacterales</taxon>
        <taxon>Sulfurovaceae</taxon>
        <taxon>Sulfurovum</taxon>
    </lineage>
</organism>
<dbReference type="EMBL" id="AP009179">
    <property type="protein sequence ID" value="BAF73262.1"/>
    <property type="molecule type" value="Genomic_DNA"/>
</dbReference>
<dbReference type="RefSeq" id="WP_012084101.1">
    <property type="nucleotide sequence ID" value="NC_009663.1"/>
</dbReference>
<dbReference type="SMR" id="A6QCQ3"/>
<dbReference type="STRING" id="387093.SUN_2326"/>
<dbReference type="KEGG" id="sun:SUN_2326"/>
<dbReference type="eggNOG" id="COG0091">
    <property type="taxonomic scope" value="Bacteria"/>
</dbReference>
<dbReference type="HOGENOM" id="CLU_083987_3_2_7"/>
<dbReference type="OrthoDB" id="9805969at2"/>
<dbReference type="Proteomes" id="UP000006378">
    <property type="component" value="Chromosome"/>
</dbReference>
<dbReference type="GO" id="GO:0022625">
    <property type="term" value="C:cytosolic large ribosomal subunit"/>
    <property type="evidence" value="ECO:0007669"/>
    <property type="project" value="TreeGrafter"/>
</dbReference>
<dbReference type="GO" id="GO:0019843">
    <property type="term" value="F:rRNA binding"/>
    <property type="evidence" value="ECO:0007669"/>
    <property type="project" value="UniProtKB-UniRule"/>
</dbReference>
<dbReference type="GO" id="GO:0003735">
    <property type="term" value="F:structural constituent of ribosome"/>
    <property type="evidence" value="ECO:0007669"/>
    <property type="project" value="InterPro"/>
</dbReference>
<dbReference type="GO" id="GO:0006412">
    <property type="term" value="P:translation"/>
    <property type="evidence" value="ECO:0007669"/>
    <property type="project" value="UniProtKB-UniRule"/>
</dbReference>
<dbReference type="CDD" id="cd00336">
    <property type="entry name" value="Ribosomal_L22"/>
    <property type="match status" value="1"/>
</dbReference>
<dbReference type="Gene3D" id="3.90.470.10">
    <property type="entry name" value="Ribosomal protein L22/L17"/>
    <property type="match status" value="1"/>
</dbReference>
<dbReference type="HAMAP" id="MF_01331_B">
    <property type="entry name" value="Ribosomal_uL22_B"/>
    <property type="match status" value="1"/>
</dbReference>
<dbReference type="InterPro" id="IPR001063">
    <property type="entry name" value="Ribosomal_uL22"/>
</dbReference>
<dbReference type="InterPro" id="IPR005727">
    <property type="entry name" value="Ribosomal_uL22_bac/chlpt-type"/>
</dbReference>
<dbReference type="InterPro" id="IPR047867">
    <property type="entry name" value="Ribosomal_uL22_bac/org-type"/>
</dbReference>
<dbReference type="InterPro" id="IPR036394">
    <property type="entry name" value="Ribosomal_uL22_sf"/>
</dbReference>
<dbReference type="NCBIfam" id="TIGR01044">
    <property type="entry name" value="rplV_bact"/>
    <property type="match status" value="1"/>
</dbReference>
<dbReference type="PANTHER" id="PTHR13501">
    <property type="entry name" value="CHLOROPLAST 50S RIBOSOMAL PROTEIN L22-RELATED"/>
    <property type="match status" value="1"/>
</dbReference>
<dbReference type="PANTHER" id="PTHR13501:SF8">
    <property type="entry name" value="LARGE RIBOSOMAL SUBUNIT PROTEIN UL22M"/>
    <property type="match status" value="1"/>
</dbReference>
<dbReference type="Pfam" id="PF00237">
    <property type="entry name" value="Ribosomal_L22"/>
    <property type="match status" value="1"/>
</dbReference>
<dbReference type="SUPFAM" id="SSF54843">
    <property type="entry name" value="Ribosomal protein L22"/>
    <property type="match status" value="1"/>
</dbReference>
<proteinExistence type="inferred from homology"/>